<comment type="subcellular location">
    <subcellularLocation>
        <location evidence="3">Cell membrane</location>
        <topology evidence="3">Lipid-anchor</topology>
        <topology evidence="3">GPI-anchor</topology>
    </subcellularLocation>
</comment>
<comment type="alternative products">
    <event type="alternative splicing"/>
    <isoform>
        <id>Q8C4W3-1</id>
        <name>1</name>
        <sequence type="displayed"/>
    </isoform>
    <isoform>
        <id>Q8C4W3-2</id>
        <name>2</name>
        <sequence type="described" ref="VSP_031481"/>
    </isoform>
</comment>
<comment type="similarity">
    <text evidence="3">Belongs to the neuritin family.</text>
</comment>
<reference key="1">
    <citation type="journal article" date="2008" name="J. Comp. Neurol.">
        <title>cpg15 and cpg15-2 constitute a family of activity-regulated ligands expressed differentially in the nervous system to promote neurite growth and neuronal survival.</title>
        <authorList>
            <person name="Fujino T."/>
            <person name="Wu Z."/>
            <person name="Lin W.C."/>
            <person name="Phillips M.A."/>
            <person name="Nedivi E."/>
        </authorList>
    </citation>
    <scope>NUCLEOTIDE SEQUENCE [MRNA] (ISOFORM 1)</scope>
    <source>
        <strain>C57BL/6J</strain>
        <tissue>Brain</tissue>
    </source>
</reference>
<reference key="2">
    <citation type="journal article" date="2005" name="Science">
        <title>The transcriptional landscape of the mammalian genome.</title>
        <authorList>
            <person name="Carninci P."/>
            <person name="Kasukawa T."/>
            <person name="Katayama S."/>
            <person name="Gough J."/>
            <person name="Frith M.C."/>
            <person name="Maeda N."/>
            <person name="Oyama R."/>
            <person name="Ravasi T."/>
            <person name="Lenhard B."/>
            <person name="Wells C."/>
            <person name="Kodzius R."/>
            <person name="Shimokawa K."/>
            <person name="Bajic V.B."/>
            <person name="Brenner S.E."/>
            <person name="Batalov S."/>
            <person name="Forrest A.R."/>
            <person name="Zavolan M."/>
            <person name="Davis M.J."/>
            <person name="Wilming L.G."/>
            <person name="Aidinis V."/>
            <person name="Allen J.E."/>
            <person name="Ambesi-Impiombato A."/>
            <person name="Apweiler R."/>
            <person name="Aturaliya R.N."/>
            <person name="Bailey T.L."/>
            <person name="Bansal M."/>
            <person name="Baxter L."/>
            <person name="Beisel K.W."/>
            <person name="Bersano T."/>
            <person name="Bono H."/>
            <person name="Chalk A.M."/>
            <person name="Chiu K.P."/>
            <person name="Choudhary V."/>
            <person name="Christoffels A."/>
            <person name="Clutterbuck D.R."/>
            <person name="Crowe M.L."/>
            <person name="Dalla E."/>
            <person name="Dalrymple B.P."/>
            <person name="de Bono B."/>
            <person name="Della Gatta G."/>
            <person name="di Bernardo D."/>
            <person name="Down T."/>
            <person name="Engstrom P."/>
            <person name="Fagiolini M."/>
            <person name="Faulkner G."/>
            <person name="Fletcher C.F."/>
            <person name="Fukushima T."/>
            <person name="Furuno M."/>
            <person name="Futaki S."/>
            <person name="Gariboldi M."/>
            <person name="Georgii-Hemming P."/>
            <person name="Gingeras T.R."/>
            <person name="Gojobori T."/>
            <person name="Green R.E."/>
            <person name="Gustincich S."/>
            <person name="Harbers M."/>
            <person name="Hayashi Y."/>
            <person name="Hensch T.K."/>
            <person name="Hirokawa N."/>
            <person name="Hill D."/>
            <person name="Huminiecki L."/>
            <person name="Iacono M."/>
            <person name="Ikeo K."/>
            <person name="Iwama A."/>
            <person name="Ishikawa T."/>
            <person name="Jakt M."/>
            <person name="Kanapin A."/>
            <person name="Katoh M."/>
            <person name="Kawasawa Y."/>
            <person name="Kelso J."/>
            <person name="Kitamura H."/>
            <person name="Kitano H."/>
            <person name="Kollias G."/>
            <person name="Krishnan S.P."/>
            <person name="Kruger A."/>
            <person name="Kummerfeld S.K."/>
            <person name="Kurochkin I.V."/>
            <person name="Lareau L.F."/>
            <person name="Lazarevic D."/>
            <person name="Lipovich L."/>
            <person name="Liu J."/>
            <person name="Liuni S."/>
            <person name="McWilliam S."/>
            <person name="Madan Babu M."/>
            <person name="Madera M."/>
            <person name="Marchionni L."/>
            <person name="Matsuda H."/>
            <person name="Matsuzawa S."/>
            <person name="Miki H."/>
            <person name="Mignone F."/>
            <person name="Miyake S."/>
            <person name="Morris K."/>
            <person name="Mottagui-Tabar S."/>
            <person name="Mulder N."/>
            <person name="Nakano N."/>
            <person name="Nakauchi H."/>
            <person name="Ng P."/>
            <person name="Nilsson R."/>
            <person name="Nishiguchi S."/>
            <person name="Nishikawa S."/>
            <person name="Nori F."/>
            <person name="Ohara O."/>
            <person name="Okazaki Y."/>
            <person name="Orlando V."/>
            <person name="Pang K.C."/>
            <person name="Pavan W.J."/>
            <person name="Pavesi G."/>
            <person name="Pesole G."/>
            <person name="Petrovsky N."/>
            <person name="Piazza S."/>
            <person name="Reed J."/>
            <person name="Reid J.F."/>
            <person name="Ring B.Z."/>
            <person name="Ringwald M."/>
            <person name="Rost B."/>
            <person name="Ruan Y."/>
            <person name="Salzberg S.L."/>
            <person name="Sandelin A."/>
            <person name="Schneider C."/>
            <person name="Schoenbach C."/>
            <person name="Sekiguchi K."/>
            <person name="Semple C.A."/>
            <person name="Seno S."/>
            <person name="Sessa L."/>
            <person name="Sheng Y."/>
            <person name="Shibata Y."/>
            <person name="Shimada H."/>
            <person name="Shimada K."/>
            <person name="Silva D."/>
            <person name="Sinclair B."/>
            <person name="Sperling S."/>
            <person name="Stupka E."/>
            <person name="Sugiura K."/>
            <person name="Sultana R."/>
            <person name="Takenaka Y."/>
            <person name="Taki K."/>
            <person name="Tammoja K."/>
            <person name="Tan S.L."/>
            <person name="Tang S."/>
            <person name="Taylor M.S."/>
            <person name="Tegner J."/>
            <person name="Teichmann S.A."/>
            <person name="Ueda H.R."/>
            <person name="van Nimwegen E."/>
            <person name="Verardo R."/>
            <person name="Wei C.L."/>
            <person name="Yagi K."/>
            <person name="Yamanishi H."/>
            <person name="Zabarovsky E."/>
            <person name="Zhu S."/>
            <person name="Zimmer A."/>
            <person name="Hide W."/>
            <person name="Bult C."/>
            <person name="Grimmond S.M."/>
            <person name="Teasdale R.D."/>
            <person name="Liu E.T."/>
            <person name="Brusic V."/>
            <person name="Quackenbush J."/>
            <person name="Wahlestedt C."/>
            <person name="Mattick J.S."/>
            <person name="Hume D.A."/>
            <person name="Kai C."/>
            <person name="Sasaki D."/>
            <person name="Tomaru Y."/>
            <person name="Fukuda S."/>
            <person name="Kanamori-Katayama M."/>
            <person name="Suzuki M."/>
            <person name="Aoki J."/>
            <person name="Arakawa T."/>
            <person name="Iida J."/>
            <person name="Imamura K."/>
            <person name="Itoh M."/>
            <person name="Kato T."/>
            <person name="Kawaji H."/>
            <person name="Kawagashira N."/>
            <person name="Kawashima T."/>
            <person name="Kojima M."/>
            <person name="Kondo S."/>
            <person name="Konno H."/>
            <person name="Nakano K."/>
            <person name="Ninomiya N."/>
            <person name="Nishio T."/>
            <person name="Okada M."/>
            <person name="Plessy C."/>
            <person name="Shibata K."/>
            <person name="Shiraki T."/>
            <person name="Suzuki S."/>
            <person name="Tagami M."/>
            <person name="Waki K."/>
            <person name="Watahiki A."/>
            <person name="Okamura-Oho Y."/>
            <person name="Suzuki H."/>
            <person name="Kawai J."/>
            <person name="Hayashizaki Y."/>
        </authorList>
    </citation>
    <scope>NUCLEOTIDE SEQUENCE [LARGE SCALE MRNA] (ISOFORMS 1 AND 2)</scope>
    <source>
        <strain>C57BL/6J</strain>
        <tissue>Ovary</tissue>
        <tissue>Retina</tissue>
        <tissue>Uterus</tissue>
    </source>
</reference>
<reference key="3">
    <citation type="journal article" date="2004" name="Genome Res.">
        <title>The status, quality, and expansion of the NIH full-length cDNA project: the Mammalian Gene Collection (MGC).</title>
        <authorList>
            <consortium name="The MGC Project Team"/>
        </authorList>
    </citation>
    <scope>NUCLEOTIDE SEQUENCE [LARGE SCALE MRNA] (ISOFORM 1)</scope>
    <source>
        <tissue>Oocyte</tissue>
    </source>
</reference>
<proteinExistence type="evidence at transcript level"/>
<accession>Q8C4W3</accession>
<accession>Q8BN06</accession>
<name>NRN1L_MOUSE</name>
<keyword id="KW-0025">Alternative splicing</keyword>
<keyword id="KW-1003">Cell membrane</keyword>
<keyword id="KW-0325">Glycoprotein</keyword>
<keyword id="KW-0336">GPI-anchor</keyword>
<keyword id="KW-0449">Lipoprotein</keyword>
<keyword id="KW-0472">Membrane</keyword>
<keyword id="KW-1185">Reference proteome</keyword>
<keyword id="KW-0732">Signal</keyword>
<protein>
    <recommendedName>
        <fullName>Neuritin-like protein</fullName>
    </recommendedName>
    <alternativeName>
        <fullName>Candidate plasticity gene 15-2 protein</fullName>
    </alternativeName>
</protein>
<gene>
    <name type="primary">Nrn1l</name>
    <name type="synonym">Cpg15-2</name>
</gene>
<feature type="signal peptide" evidence="1">
    <location>
        <begin position="1"/>
        <end position="32"/>
    </location>
</feature>
<feature type="chain" id="PRO_0000319431" description="Neuritin-like protein">
    <location>
        <begin position="33"/>
        <end position="136"/>
    </location>
</feature>
<feature type="propeptide" id="PRO_0000319432" description="Removed in mature form" evidence="1">
    <location>
        <begin position="137"/>
        <end position="162"/>
    </location>
</feature>
<feature type="lipid moiety-binding region" description="GPI-anchor amidated alanine" evidence="1">
    <location>
        <position position="136"/>
    </location>
</feature>
<feature type="splice variant" id="VSP_031481" description="In isoform 2." evidence="2">
    <location>
        <position position="30"/>
    </location>
</feature>
<organism>
    <name type="scientific">Mus musculus</name>
    <name type="common">Mouse</name>
    <dbReference type="NCBI Taxonomy" id="10090"/>
    <lineage>
        <taxon>Eukaryota</taxon>
        <taxon>Metazoa</taxon>
        <taxon>Chordata</taxon>
        <taxon>Craniata</taxon>
        <taxon>Vertebrata</taxon>
        <taxon>Euteleostomi</taxon>
        <taxon>Mammalia</taxon>
        <taxon>Eutheria</taxon>
        <taxon>Euarchontoglires</taxon>
        <taxon>Glires</taxon>
        <taxon>Rodentia</taxon>
        <taxon>Myomorpha</taxon>
        <taxon>Muroidea</taxon>
        <taxon>Muridae</taxon>
        <taxon>Murinae</taxon>
        <taxon>Mus</taxon>
        <taxon>Mus</taxon>
    </lineage>
</organism>
<evidence type="ECO:0000255" key="1"/>
<evidence type="ECO:0000303" key="2">
    <source>
    </source>
</evidence>
<evidence type="ECO:0000305" key="3"/>
<sequence length="162" mass="17390">MMCNCCHCHWRRRCQRLPCALTLLLLLPLAVASEGPNRCDTIYQGFAECLIRLGDGMGRGGELQTVCRSWNDFHACASRVLSGCPEEAAAVWESLQQEARRAPHPDNLHILCGAPVSVRERIAGPETNQETLRATAPALAPAPAPVLLAAALALACLLGPLA</sequence>
<dbReference type="EMBL" id="DQ176852">
    <property type="protein sequence ID" value="ABA55711.1"/>
    <property type="molecule type" value="mRNA"/>
</dbReference>
<dbReference type="EMBL" id="AK080711">
    <property type="protein sequence ID" value="BAC37986.1"/>
    <property type="molecule type" value="mRNA"/>
</dbReference>
<dbReference type="EMBL" id="AK090312">
    <property type="protein sequence ID" value="BAC41165.1"/>
    <property type="molecule type" value="mRNA"/>
</dbReference>
<dbReference type="EMBL" id="BC100315">
    <property type="protein sequence ID" value="AAI00316.1"/>
    <property type="molecule type" value="mRNA"/>
</dbReference>
<dbReference type="CCDS" id="CCDS22618.1">
    <molecule id="Q8C4W3-1"/>
</dbReference>
<dbReference type="CCDS" id="CCDS80924.1">
    <molecule id="Q8C4W3-2"/>
</dbReference>
<dbReference type="RefSeq" id="NP_001288103.1">
    <molecule id="Q8C4W3-2"/>
    <property type="nucleotide sequence ID" value="NM_001301174.1"/>
</dbReference>
<dbReference type="RefSeq" id="NP_778189.1">
    <molecule id="Q8C4W3-1"/>
    <property type="nucleotide sequence ID" value="NM_175024.4"/>
</dbReference>
<dbReference type="FunCoup" id="Q8C4W3">
    <property type="interactions" value="148"/>
</dbReference>
<dbReference type="STRING" id="10090.ENSMUSP00000056940"/>
<dbReference type="PaxDb" id="10090-ENSMUSP00000056940"/>
<dbReference type="ProteomicsDB" id="293736">
    <molecule id="Q8C4W3-1"/>
</dbReference>
<dbReference type="ProteomicsDB" id="293737">
    <molecule id="Q8C4W3-2"/>
</dbReference>
<dbReference type="Antibodypedia" id="49763">
    <property type="antibodies" value="90 antibodies from 18 providers"/>
</dbReference>
<dbReference type="DNASU" id="234700"/>
<dbReference type="Ensembl" id="ENSMUST00000060167.6">
    <molecule id="Q8C4W3-1"/>
    <property type="protein sequence ID" value="ENSMUSP00000056940.6"/>
    <property type="gene ID" value="ENSMUSG00000044287.7"/>
</dbReference>
<dbReference type="Ensembl" id="ENSMUST00000118920.2">
    <molecule id="Q8C4W3-2"/>
    <property type="protein sequence ID" value="ENSMUSP00000113445.2"/>
    <property type="gene ID" value="ENSMUSG00000044287.7"/>
</dbReference>
<dbReference type="GeneID" id="234700"/>
<dbReference type="KEGG" id="mmu:234700"/>
<dbReference type="UCSC" id="uc009nem.2">
    <molecule id="Q8C4W3-1"/>
    <property type="organism name" value="mouse"/>
</dbReference>
<dbReference type="UCSC" id="uc012gjq.2">
    <molecule id="Q8C4W3-2"/>
    <property type="organism name" value="mouse"/>
</dbReference>
<dbReference type="AGR" id="MGI:2443642"/>
<dbReference type="CTD" id="123904"/>
<dbReference type="MGI" id="MGI:2443642">
    <property type="gene designation" value="Nrn1l"/>
</dbReference>
<dbReference type="VEuPathDB" id="HostDB:ENSMUSG00000044287"/>
<dbReference type="eggNOG" id="ENOG502S3XG">
    <property type="taxonomic scope" value="Eukaryota"/>
</dbReference>
<dbReference type="GeneTree" id="ENSGT00530000063853"/>
<dbReference type="HOGENOM" id="CLU_133886_0_0_1"/>
<dbReference type="InParanoid" id="Q8C4W3"/>
<dbReference type="OMA" id="HACASQV"/>
<dbReference type="OrthoDB" id="9929715at2759"/>
<dbReference type="PhylomeDB" id="Q8C4W3"/>
<dbReference type="TreeFam" id="TF332589"/>
<dbReference type="Reactome" id="R-MMU-163125">
    <property type="pathway name" value="Post-translational modification: synthesis of GPI-anchored proteins"/>
</dbReference>
<dbReference type="BioGRID-ORCS" id="234700">
    <property type="hits" value="3 hits in 75 CRISPR screens"/>
</dbReference>
<dbReference type="ChiTaRS" id="Nrn1l">
    <property type="organism name" value="mouse"/>
</dbReference>
<dbReference type="PRO" id="PR:Q8C4W3"/>
<dbReference type="Proteomes" id="UP000000589">
    <property type="component" value="Chromosome 8"/>
</dbReference>
<dbReference type="RNAct" id="Q8C4W3">
    <property type="molecule type" value="protein"/>
</dbReference>
<dbReference type="Bgee" id="ENSMUSG00000044287">
    <property type="expression patterns" value="Expressed in primary oocyte and 55 other cell types or tissues"/>
</dbReference>
<dbReference type="GO" id="GO:0030424">
    <property type="term" value="C:axon"/>
    <property type="evidence" value="ECO:0000314"/>
    <property type="project" value="MGI"/>
</dbReference>
<dbReference type="GO" id="GO:0005615">
    <property type="term" value="C:extracellular space"/>
    <property type="evidence" value="ECO:0000314"/>
    <property type="project" value="MGI"/>
</dbReference>
<dbReference type="GO" id="GO:0016020">
    <property type="term" value="C:membrane"/>
    <property type="evidence" value="ECO:0000314"/>
    <property type="project" value="MGI"/>
</dbReference>
<dbReference type="GO" id="GO:0005886">
    <property type="term" value="C:plasma membrane"/>
    <property type="evidence" value="ECO:0000314"/>
    <property type="project" value="MGI"/>
</dbReference>
<dbReference type="GO" id="GO:0098552">
    <property type="term" value="C:side of membrane"/>
    <property type="evidence" value="ECO:0007669"/>
    <property type="project" value="UniProtKB-KW"/>
</dbReference>
<dbReference type="GO" id="GO:0042802">
    <property type="term" value="F:identical protein binding"/>
    <property type="evidence" value="ECO:0000353"/>
    <property type="project" value="MGI"/>
</dbReference>
<dbReference type="GO" id="GO:1990138">
    <property type="term" value="P:neuron projection extension"/>
    <property type="evidence" value="ECO:0000314"/>
    <property type="project" value="MGI"/>
</dbReference>
<dbReference type="InterPro" id="IPR026144">
    <property type="entry name" value="Neuritin_fam"/>
</dbReference>
<dbReference type="PANTHER" id="PTHR15902:SF2">
    <property type="entry name" value="NEURITIN-LIKE PROTEIN"/>
    <property type="match status" value="1"/>
</dbReference>
<dbReference type="PANTHER" id="PTHR15902">
    <property type="entry name" value="NEURITIN-RELATED"/>
    <property type="match status" value="1"/>
</dbReference>
<dbReference type="Pfam" id="PF15056">
    <property type="entry name" value="NRN1"/>
    <property type="match status" value="1"/>
</dbReference>